<accession>C8WLE3</accession>
<feature type="signal peptide" description="Tat-type signal" evidence="5">
    <location>
        <begin position="1"/>
        <end position="40"/>
    </location>
</feature>
<feature type="chain" id="PRO_0000446103" description="Urocanate reductase">
    <location>
        <begin position="41"/>
        <end position="606"/>
    </location>
</feature>
<feature type="active site" description="Proton donor" evidence="2">
    <location>
        <position position="433"/>
    </location>
</feature>
<feature type="binding site" evidence="3">
    <location>
        <position position="163"/>
    </location>
    <ligand>
        <name>FAD</name>
        <dbReference type="ChEBI" id="CHEBI:57692"/>
    </ligand>
</feature>
<feature type="binding site" evidence="3">
    <location>
        <position position="182"/>
    </location>
    <ligand>
        <name>FAD</name>
        <dbReference type="ChEBI" id="CHEBI:57692"/>
    </ligand>
</feature>
<feature type="binding site" evidence="3">
    <location>
        <position position="191"/>
    </location>
    <ligand>
        <name>FAD</name>
        <dbReference type="ChEBI" id="CHEBI:57692"/>
    </ligand>
</feature>
<feature type="binding site" evidence="3">
    <location>
        <position position="195"/>
    </location>
    <ligand>
        <name>FAD</name>
        <dbReference type="ChEBI" id="CHEBI:57692"/>
    </ligand>
</feature>
<feature type="binding site" evidence="3">
    <location>
        <position position="196"/>
    </location>
    <ligand>
        <name>FAD</name>
        <dbReference type="ChEBI" id="CHEBI:57692"/>
    </ligand>
</feature>
<feature type="binding site" evidence="3">
    <location>
        <position position="197"/>
    </location>
    <ligand>
        <name>FAD</name>
        <dbReference type="ChEBI" id="CHEBI:57692"/>
    </ligand>
</feature>
<feature type="binding site" evidence="3">
    <location>
        <position position="305"/>
    </location>
    <ligand>
        <name>FAD</name>
        <dbReference type="ChEBI" id="CHEBI:57692"/>
    </ligand>
</feature>
<feature type="binding site" evidence="3">
    <location>
        <position position="373"/>
    </location>
    <ligand>
        <name>FAD</name>
        <dbReference type="ChEBI" id="CHEBI:57692"/>
    </ligand>
</feature>
<feature type="binding site" evidence="3">
    <location>
        <position position="572"/>
    </location>
    <ligand>
        <name>FAD</name>
        <dbReference type="ChEBI" id="CHEBI:57692"/>
    </ligand>
</feature>
<feature type="binding site" evidence="3">
    <location>
        <position position="588"/>
    </location>
    <ligand>
        <name>FAD</name>
        <dbReference type="ChEBI" id="CHEBI:57692"/>
    </ligand>
</feature>
<feature type="modified residue" description="FMN phosphoryl threonine" evidence="1">
    <location>
        <position position="111"/>
    </location>
</feature>
<proteinExistence type="evidence at protein level"/>
<protein>
    <recommendedName>
        <fullName evidence="6">Urocanate reductase</fullName>
        <ecNumber evidence="4 8">1.3.99.33</ecNumber>
    </recommendedName>
</protein>
<keyword id="KW-0274">FAD</keyword>
<keyword id="KW-0285">Flavoprotein</keyword>
<keyword id="KW-0288">FMN</keyword>
<keyword id="KW-0560">Oxidoreductase</keyword>
<keyword id="KW-0597">Phosphoprotein</keyword>
<keyword id="KW-1185">Reference proteome</keyword>
<keyword id="KW-0732">Signal</keyword>
<evidence type="ECO:0000250" key="1">
    <source>
        <dbReference type="UniProtKB" id="A0A1R4LHH9"/>
    </source>
</evidence>
<evidence type="ECO:0000250" key="2">
    <source>
        <dbReference type="UniProtKB" id="P0C278"/>
    </source>
</evidence>
<evidence type="ECO:0000250" key="3">
    <source>
        <dbReference type="UniProtKB" id="P83223"/>
    </source>
</evidence>
<evidence type="ECO:0000250" key="4">
    <source>
        <dbReference type="UniProtKB" id="Q8CVD0"/>
    </source>
</evidence>
<evidence type="ECO:0000255" key="5">
    <source>
        <dbReference type="PROSITE-ProRule" id="PRU00648"/>
    </source>
</evidence>
<evidence type="ECO:0000303" key="6">
    <source>
    </source>
</evidence>
<evidence type="ECO:0000305" key="7"/>
<evidence type="ECO:0000305" key="8">
    <source>
    </source>
</evidence>
<evidence type="ECO:0000312" key="9">
    <source>
        <dbReference type="EMBL" id="ACV54473.1"/>
    </source>
</evidence>
<sequence length="606" mass="63494">MSNLSRRNFITGGAIAALGGTLAIAGCAPKGESSSTVAGAAGEGAQAWTGTANGKGGELTVEVITEGDSIARINPLKSRESYGVGTAGIDVLSDLIVKNQTLNVDMVTGATVSSMAFLTAVSDAVDASGMKSSEWKKREKAVPQAPEGLTTDVDVVVVGAGGAGYAAALTAAEAGKNVVLLEKLGIVGGDTILSGGAMAVPNNWFQKRDGIEDSVEKMAEDMIVGGDHVGDPDLVNVICEGAYGAMEWLIFNGGVAWQPYERFFGGHSVIRSLIPEGNEGSGIICKLDKRAEGLKNLKVCRNTKADELVQDASGAVVGLKATNTATGETYDFKAKAVILAAGGFGSNVEMRMKYNPEMDEKILSTDSVGATGDCHVMAEKIGANLIDMQYIQTYPTCDTQTGALLYVGNMRLENRAICINKEGDRFVEEMERRDVISNAIKEQTDGIGYMIFNQDGLDHTDIATVNAAEMDGLFGRGQLAKGETIAEACEPFGIDAAELQKTVEKWNGYCKDGADPDFNYRAALNPIEGGPYYILAYKPSVHYTMGGLHINTDAQVLDSDAAPIPGLFAAGEQAGHKMGTNRLGSCSITDVFVFGRVAGANAAALA</sequence>
<name>URDA_EGGLE</name>
<organism>
    <name type="scientific">Eggerthella lenta (strain ATCC 25559 / DSM 2243 / CCUG 17323 / JCM 9979 / KCTC 3265 / NCTC 11813 / VPI 0255 / 1899 B)</name>
    <name type="common">Eubacterium lentum</name>
    <dbReference type="NCBI Taxonomy" id="479437"/>
    <lineage>
        <taxon>Bacteria</taxon>
        <taxon>Bacillati</taxon>
        <taxon>Actinomycetota</taxon>
        <taxon>Coriobacteriia</taxon>
        <taxon>Eggerthellales</taxon>
        <taxon>Eggerthellaceae</taxon>
        <taxon>Eggerthella</taxon>
    </lineage>
</organism>
<comment type="function">
    <text evidence="8">Catalyzes the two-electron reduction of urocanate to dihydrourocanate (also named imidazole propionate or deamino-histidine). Dihydrourocanate is present at higher concentrations in subjects with type 2 diabetes, and directly impairs glucose tolerance and insulin signaling at the level of insulin receptor substrate (IRS) through activation of p38 gamma (MAPK12)-p62-mTORC1. Therefore, the UrdA enzyme from the gut bacteria E.lenta strain DSM 2243 may contribute to the pathogenesis of type 2 diabetes by producing the microbial metabolite dihydrourocanate.</text>
</comment>
<comment type="catalytic activity">
    <reaction evidence="4 8">
        <text>dihydrourocanate + A = urocanate + AH2</text>
        <dbReference type="Rhea" id="RHEA:36059"/>
        <dbReference type="ChEBI" id="CHEBI:13193"/>
        <dbReference type="ChEBI" id="CHEBI:17499"/>
        <dbReference type="ChEBI" id="CHEBI:27247"/>
        <dbReference type="ChEBI" id="CHEBI:72991"/>
        <dbReference type="EC" id="1.3.99.33"/>
    </reaction>
</comment>
<comment type="cofactor">
    <cofactor evidence="4">
        <name>FAD</name>
        <dbReference type="ChEBI" id="CHEBI:57692"/>
    </cofactor>
    <text evidence="4">Binds 1 FAD per subunit.</text>
</comment>
<comment type="cofactor">
    <cofactor evidence="4">
        <name>FMN</name>
        <dbReference type="ChEBI" id="CHEBI:58210"/>
    </cofactor>
    <text evidence="4">Binds 1 FMN covalently per subunit.</text>
</comment>
<comment type="PTM">
    <text evidence="5">Predicted to be exported by the Tat system. The position of the signal peptide cleavage has not been experimentally proven.</text>
</comment>
<comment type="miscellaneous">
    <text evidence="8">E.lenta strain DSM 2243 is significantly more abundant in subjects with type 2 diabetes (T2D) compared with subjects with normal glucose tolerance (NGT).</text>
</comment>
<comment type="similarity">
    <text evidence="7">Belongs to the FAD-dependent oxidoreductase 2 family. FRD/SDH subfamily.</text>
</comment>
<reference key="1">
    <citation type="journal article" date="2009" name="Stand. Genomic Sci.">
        <title>Complete genome sequence of Eggerthella lenta type strain (IPP VPI 0255).</title>
        <authorList>
            <person name="Saunders E."/>
            <person name="Pukall R."/>
            <person name="Abt B."/>
            <person name="Lapidus A."/>
            <person name="Glavina Del Rio T."/>
            <person name="Copeland A."/>
            <person name="Tice H."/>
            <person name="Cheng J.F."/>
            <person name="Lucas S."/>
            <person name="Chen F."/>
            <person name="Nolan M."/>
            <person name="Bruce D."/>
            <person name="Goodwin L."/>
            <person name="Pitluck S."/>
            <person name="Ivanova N."/>
            <person name="Mavromatis K."/>
            <person name="Ovchinnikova G."/>
            <person name="Pati A."/>
            <person name="Chen A."/>
            <person name="Palaniappan K."/>
            <person name="Land M."/>
            <person name="Hauser L."/>
            <person name="Chang Y.J."/>
            <person name="Jeffries C.D."/>
            <person name="Chain P."/>
            <person name="Meincke L."/>
            <person name="Sims D."/>
            <person name="Brettin T."/>
            <person name="Detter J.C."/>
            <person name="Goker M."/>
            <person name="Bristow J."/>
            <person name="Eisen J.A."/>
            <person name="Markowitz V."/>
            <person name="Hugenholtz P."/>
            <person name="Kyrpides N.C."/>
            <person name="Klenk H.P."/>
            <person name="Han C."/>
        </authorList>
    </citation>
    <scope>NUCLEOTIDE SEQUENCE [LARGE SCALE GENOMIC DNA]</scope>
    <source>
        <strain>ATCC 25559 / DSM 2243 / CCUG 17323 / JCM 9979 / KCTC 3265 / NCTC 11813 / VPI 0255 / 1899 B</strain>
    </source>
</reference>
<reference key="2">
    <citation type="journal article" date="2018" name="Cell">
        <title>Microbially produced imidazole propionate impairs insulin signaling through mTORC1.</title>
        <authorList>
            <person name="Koh A."/>
            <person name="Molinaro A."/>
            <person name="Staahlman M."/>
            <person name="Khan M.T."/>
            <person name="Schmidt C."/>
            <person name="Manneraas-Holm L."/>
            <person name="Wu H."/>
            <person name="Carreras A."/>
            <person name="Jeong H."/>
            <person name="Olofsson L.E."/>
            <person name="Bergh P.O."/>
            <person name="Gerdes V."/>
            <person name="Hartstra A."/>
            <person name="de Brauw M."/>
            <person name="Perkins R."/>
            <person name="Nieuwdorp M."/>
            <person name="Bergstroem G."/>
            <person name="Baeckhed F."/>
        </authorList>
    </citation>
    <scope>PREDICTED FUNCTION</scope>
    <scope>CATALYTIC ACTIVITY</scope>
    <source>
        <strain>ATCC 25559 / DSM 2243 / CCUG 17323 / JCM 9979 / KCTC 3265 / NCTC 11813 / VPI 0255 / 1899 B</strain>
    </source>
</reference>
<dbReference type="EC" id="1.3.99.33" evidence="4 8"/>
<dbReference type="EMBL" id="CP001726">
    <property type="protein sequence ID" value="ACV54473.1"/>
    <property type="molecule type" value="Genomic_DNA"/>
</dbReference>
<dbReference type="RefSeq" id="WP_015760010.1">
    <property type="nucleotide sequence ID" value="NC_013204.1"/>
</dbReference>
<dbReference type="SMR" id="C8WLE3"/>
<dbReference type="STRING" id="479437.Elen_0488"/>
<dbReference type="PaxDb" id="479437-Elen_0488"/>
<dbReference type="KEGG" id="ele:Elen_0488"/>
<dbReference type="eggNOG" id="COG1053">
    <property type="taxonomic scope" value="Bacteria"/>
</dbReference>
<dbReference type="eggNOG" id="COG3976">
    <property type="taxonomic scope" value="Bacteria"/>
</dbReference>
<dbReference type="HOGENOM" id="CLU_011398_4_0_11"/>
<dbReference type="OrthoDB" id="9805351at2"/>
<dbReference type="BioCyc" id="ELEN479437:G1GFY-489-MONOMER"/>
<dbReference type="Proteomes" id="UP000001377">
    <property type="component" value="Chromosome"/>
</dbReference>
<dbReference type="GO" id="GO:0016020">
    <property type="term" value="C:membrane"/>
    <property type="evidence" value="ECO:0007669"/>
    <property type="project" value="InterPro"/>
</dbReference>
<dbReference type="GO" id="GO:0010181">
    <property type="term" value="F:FMN binding"/>
    <property type="evidence" value="ECO:0007669"/>
    <property type="project" value="InterPro"/>
</dbReference>
<dbReference type="GO" id="GO:0033765">
    <property type="term" value="F:steroid dehydrogenase activity, acting on the CH-CH group of donors"/>
    <property type="evidence" value="ECO:0007669"/>
    <property type="project" value="UniProtKB-ARBA"/>
</dbReference>
<dbReference type="Gene3D" id="3.90.1010.20">
    <property type="match status" value="1"/>
</dbReference>
<dbReference type="Gene3D" id="3.50.50.60">
    <property type="entry name" value="FAD/NAD(P)-binding domain"/>
    <property type="match status" value="1"/>
</dbReference>
<dbReference type="Gene3D" id="3.90.700.10">
    <property type="entry name" value="Succinate dehydrogenase/fumarate reductase flavoprotein, catalytic domain"/>
    <property type="match status" value="1"/>
</dbReference>
<dbReference type="InterPro" id="IPR003953">
    <property type="entry name" value="FAD-dep_OxRdtase_2_FAD-bd"/>
</dbReference>
<dbReference type="InterPro" id="IPR050315">
    <property type="entry name" value="FAD-oxidoreductase_2"/>
</dbReference>
<dbReference type="InterPro" id="IPR036188">
    <property type="entry name" value="FAD/NAD-bd_sf"/>
</dbReference>
<dbReference type="InterPro" id="IPR010960">
    <property type="entry name" value="Flavocytochrome_c"/>
</dbReference>
<dbReference type="InterPro" id="IPR007329">
    <property type="entry name" value="FMN-bd"/>
</dbReference>
<dbReference type="InterPro" id="IPR027477">
    <property type="entry name" value="Succ_DH/fumarate_Rdtase_cat_sf"/>
</dbReference>
<dbReference type="InterPro" id="IPR006311">
    <property type="entry name" value="TAT_signal"/>
</dbReference>
<dbReference type="NCBIfam" id="TIGR01813">
    <property type="entry name" value="flavo_cyto_c"/>
    <property type="match status" value="1"/>
</dbReference>
<dbReference type="PANTHER" id="PTHR43400:SF7">
    <property type="entry name" value="FAD-DEPENDENT OXIDOREDUCTASE 2 FAD BINDING DOMAIN-CONTAINING PROTEIN"/>
    <property type="match status" value="1"/>
</dbReference>
<dbReference type="PANTHER" id="PTHR43400">
    <property type="entry name" value="FUMARATE REDUCTASE"/>
    <property type="match status" value="1"/>
</dbReference>
<dbReference type="Pfam" id="PF00890">
    <property type="entry name" value="FAD_binding_2"/>
    <property type="match status" value="1"/>
</dbReference>
<dbReference type="Pfam" id="PF04205">
    <property type="entry name" value="FMN_bind"/>
    <property type="match status" value="1"/>
</dbReference>
<dbReference type="PRINTS" id="PR00368">
    <property type="entry name" value="FADPNR"/>
</dbReference>
<dbReference type="SMART" id="SM00900">
    <property type="entry name" value="FMN_bind"/>
    <property type="match status" value="1"/>
</dbReference>
<dbReference type="SUPFAM" id="SSF51905">
    <property type="entry name" value="FAD/NAD(P)-binding domain"/>
    <property type="match status" value="1"/>
</dbReference>
<dbReference type="SUPFAM" id="SSF56425">
    <property type="entry name" value="Succinate dehydrogenase/fumarate reductase flavoprotein, catalytic domain"/>
    <property type="match status" value="1"/>
</dbReference>
<dbReference type="PROSITE" id="PS51318">
    <property type="entry name" value="TAT"/>
    <property type="match status" value="1"/>
</dbReference>
<gene>
    <name evidence="6" type="primary">urdA</name>
    <name evidence="9" type="ordered locus">Elen_0488</name>
</gene>